<keyword id="KW-0030">Aminoacyl-tRNA synthetase</keyword>
<keyword id="KW-0067">ATP-binding</keyword>
<keyword id="KW-0963">Cytoplasm</keyword>
<keyword id="KW-0436">Ligase</keyword>
<keyword id="KW-0460">Magnesium</keyword>
<keyword id="KW-0479">Metal-binding</keyword>
<keyword id="KW-0547">Nucleotide-binding</keyword>
<keyword id="KW-0648">Protein biosynthesis</keyword>
<proteinExistence type="inferred from homology"/>
<gene>
    <name evidence="1" type="primary">lysS</name>
    <name type="ordered locus">PsycPRwf_1456</name>
</gene>
<evidence type="ECO:0000255" key="1">
    <source>
        <dbReference type="HAMAP-Rule" id="MF_00252"/>
    </source>
</evidence>
<feature type="chain" id="PRO_1000101137" description="Lysine--tRNA ligase">
    <location>
        <begin position="1"/>
        <end position="510"/>
    </location>
</feature>
<feature type="binding site" evidence="1">
    <location>
        <position position="420"/>
    </location>
    <ligand>
        <name>Mg(2+)</name>
        <dbReference type="ChEBI" id="CHEBI:18420"/>
        <label>1</label>
    </ligand>
</feature>
<feature type="binding site" evidence="1">
    <location>
        <position position="427"/>
    </location>
    <ligand>
        <name>Mg(2+)</name>
        <dbReference type="ChEBI" id="CHEBI:18420"/>
        <label>1</label>
    </ligand>
</feature>
<feature type="binding site" evidence="1">
    <location>
        <position position="427"/>
    </location>
    <ligand>
        <name>Mg(2+)</name>
        <dbReference type="ChEBI" id="CHEBI:18420"/>
        <label>2</label>
    </ligand>
</feature>
<organism>
    <name type="scientific">Psychrobacter sp. (strain PRwf-1)</name>
    <dbReference type="NCBI Taxonomy" id="349106"/>
    <lineage>
        <taxon>Bacteria</taxon>
        <taxon>Pseudomonadati</taxon>
        <taxon>Pseudomonadota</taxon>
        <taxon>Gammaproteobacteria</taxon>
        <taxon>Moraxellales</taxon>
        <taxon>Moraxellaceae</taxon>
        <taxon>Psychrobacter</taxon>
    </lineage>
</organism>
<protein>
    <recommendedName>
        <fullName evidence="1">Lysine--tRNA ligase</fullName>
        <ecNumber evidence="1">6.1.1.6</ecNumber>
    </recommendedName>
    <alternativeName>
        <fullName evidence="1">Lysyl-tRNA synthetase</fullName>
        <shortName evidence="1">LysRS</shortName>
    </alternativeName>
</protein>
<reference key="1">
    <citation type="submission" date="2007-05" db="EMBL/GenBank/DDBJ databases">
        <title>Complete sequence of chromosome of Psychrobacter sp. PRwf-1.</title>
        <authorList>
            <consortium name="US DOE Joint Genome Institute"/>
            <person name="Copeland A."/>
            <person name="Lucas S."/>
            <person name="Lapidus A."/>
            <person name="Barry K."/>
            <person name="Detter J.C."/>
            <person name="Glavina del Rio T."/>
            <person name="Hammon N."/>
            <person name="Israni S."/>
            <person name="Dalin E."/>
            <person name="Tice H."/>
            <person name="Pitluck S."/>
            <person name="Chain P."/>
            <person name="Malfatti S."/>
            <person name="Shin M."/>
            <person name="Vergez L."/>
            <person name="Schmutz J."/>
            <person name="Larimer F."/>
            <person name="Land M."/>
            <person name="Hauser L."/>
            <person name="Kyrpides N."/>
            <person name="Kim E."/>
            <person name="Tiedje J."/>
            <person name="Richardson P."/>
        </authorList>
    </citation>
    <scope>NUCLEOTIDE SEQUENCE [LARGE SCALE GENOMIC DNA]</scope>
    <source>
        <strain>PRwf-1</strain>
    </source>
</reference>
<dbReference type="EC" id="6.1.1.6" evidence="1"/>
<dbReference type="EMBL" id="CP000713">
    <property type="protein sequence ID" value="ABQ94401.1"/>
    <property type="molecule type" value="Genomic_DNA"/>
</dbReference>
<dbReference type="SMR" id="A5WFG0"/>
<dbReference type="STRING" id="349106.PsycPRwf_1456"/>
<dbReference type="KEGG" id="prw:PsycPRwf_1456"/>
<dbReference type="eggNOG" id="COG1190">
    <property type="taxonomic scope" value="Bacteria"/>
</dbReference>
<dbReference type="HOGENOM" id="CLU_008255_6_0_6"/>
<dbReference type="GO" id="GO:0005829">
    <property type="term" value="C:cytosol"/>
    <property type="evidence" value="ECO:0007669"/>
    <property type="project" value="TreeGrafter"/>
</dbReference>
<dbReference type="GO" id="GO:0005524">
    <property type="term" value="F:ATP binding"/>
    <property type="evidence" value="ECO:0007669"/>
    <property type="project" value="UniProtKB-UniRule"/>
</dbReference>
<dbReference type="GO" id="GO:0004824">
    <property type="term" value="F:lysine-tRNA ligase activity"/>
    <property type="evidence" value="ECO:0007669"/>
    <property type="project" value="UniProtKB-UniRule"/>
</dbReference>
<dbReference type="GO" id="GO:0000287">
    <property type="term" value="F:magnesium ion binding"/>
    <property type="evidence" value="ECO:0007669"/>
    <property type="project" value="UniProtKB-UniRule"/>
</dbReference>
<dbReference type="GO" id="GO:0000049">
    <property type="term" value="F:tRNA binding"/>
    <property type="evidence" value="ECO:0007669"/>
    <property type="project" value="TreeGrafter"/>
</dbReference>
<dbReference type="GO" id="GO:0006430">
    <property type="term" value="P:lysyl-tRNA aminoacylation"/>
    <property type="evidence" value="ECO:0007669"/>
    <property type="project" value="UniProtKB-UniRule"/>
</dbReference>
<dbReference type="CDD" id="cd00775">
    <property type="entry name" value="LysRS_core"/>
    <property type="match status" value="1"/>
</dbReference>
<dbReference type="CDD" id="cd04322">
    <property type="entry name" value="LysRS_N"/>
    <property type="match status" value="1"/>
</dbReference>
<dbReference type="FunFam" id="2.40.50.140:FF:000024">
    <property type="entry name" value="Lysine--tRNA ligase"/>
    <property type="match status" value="1"/>
</dbReference>
<dbReference type="FunFam" id="3.30.930.10:FF:000001">
    <property type="entry name" value="Lysine--tRNA ligase"/>
    <property type="match status" value="1"/>
</dbReference>
<dbReference type="Gene3D" id="3.30.930.10">
    <property type="entry name" value="Bira Bifunctional Protein, Domain 2"/>
    <property type="match status" value="1"/>
</dbReference>
<dbReference type="Gene3D" id="2.40.50.140">
    <property type="entry name" value="Nucleic acid-binding proteins"/>
    <property type="match status" value="1"/>
</dbReference>
<dbReference type="HAMAP" id="MF_00252">
    <property type="entry name" value="Lys_tRNA_synth_class2"/>
    <property type="match status" value="1"/>
</dbReference>
<dbReference type="InterPro" id="IPR004364">
    <property type="entry name" value="Aa-tRNA-synt_II"/>
</dbReference>
<dbReference type="InterPro" id="IPR006195">
    <property type="entry name" value="aa-tRNA-synth_II"/>
</dbReference>
<dbReference type="InterPro" id="IPR045864">
    <property type="entry name" value="aa-tRNA-synth_II/BPL/LPL"/>
</dbReference>
<dbReference type="InterPro" id="IPR002313">
    <property type="entry name" value="Lys-tRNA-ligase_II"/>
</dbReference>
<dbReference type="InterPro" id="IPR044136">
    <property type="entry name" value="Lys-tRNA-ligase_II_N"/>
</dbReference>
<dbReference type="InterPro" id="IPR018149">
    <property type="entry name" value="Lys-tRNA-synth_II_C"/>
</dbReference>
<dbReference type="InterPro" id="IPR012340">
    <property type="entry name" value="NA-bd_OB-fold"/>
</dbReference>
<dbReference type="InterPro" id="IPR004365">
    <property type="entry name" value="NA-bd_OB_tRNA"/>
</dbReference>
<dbReference type="NCBIfam" id="TIGR00499">
    <property type="entry name" value="lysS_bact"/>
    <property type="match status" value="1"/>
</dbReference>
<dbReference type="NCBIfam" id="NF001756">
    <property type="entry name" value="PRK00484.1"/>
    <property type="match status" value="1"/>
</dbReference>
<dbReference type="PANTHER" id="PTHR42918:SF15">
    <property type="entry name" value="LYSINE--TRNA LIGASE, CHLOROPLASTIC_MITOCHONDRIAL"/>
    <property type="match status" value="1"/>
</dbReference>
<dbReference type="PANTHER" id="PTHR42918">
    <property type="entry name" value="LYSYL-TRNA SYNTHETASE"/>
    <property type="match status" value="1"/>
</dbReference>
<dbReference type="Pfam" id="PF00152">
    <property type="entry name" value="tRNA-synt_2"/>
    <property type="match status" value="1"/>
</dbReference>
<dbReference type="Pfam" id="PF01336">
    <property type="entry name" value="tRNA_anti-codon"/>
    <property type="match status" value="1"/>
</dbReference>
<dbReference type="PRINTS" id="PR00982">
    <property type="entry name" value="TRNASYNTHLYS"/>
</dbReference>
<dbReference type="SUPFAM" id="SSF55681">
    <property type="entry name" value="Class II aaRS and biotin synthetases"/>
    <property type="match status" value="1"/>
</dbReference>
<dbReference type="SUPFAM" id="SSF50249">
    <property type="entry name" value="Nucleic acid-binding proteins"/>
    <property type="match status" value="1"/>
</dbReference>
<dbReference type="PROSITE" id="PS50862">
    <property type="entry name" value="AA_TRNA_LIGASE_II"/>
    <property type="match status" value="1"/>
</dbReference>
<sequence>MSNQSTNDQDQIPSAEDTNDLIAQRQAKLDEISAAGKIAYPNQFKRTDYAEDLQKQFEGITKQEIEENAANGGKTQVSIAGRVMLNRGAFIVIQDMTGRIQLYVARKELDEDSLALIKSLDLGDIIGVSGYIGRSGKGDLYVHIEQITLLTKSLRPMPNKFHGLADTEARYRNRHLDLMTNESSRNTFMIRSQVISGIRKFMLNERFMEVETPMMHPIPGGAVARPFITHHNALDMPLYLRIAPELYLKRLVVGGFERVFEINRSFRNEGVSTRHNPEFTMIEFYQAYADYKDLMDLTERLFNQLAMDILGTTELTYQEETISLKAPFARLSMTDAIAQYAEGFDMSKVADRDYLADYAQNVLKQQVKEGFGIGKLQTIIFEETAEHKLRQPTFITQYPAETSPLARRNDENPEITDRFELFIGGREIANGFSELNDPADQAERFHNQVAEKDAGDDEAMHFDADYIEALAYGLPPTAGEGIGIDRLVMLFTDAASIRDVILFPHMRIKH</sequence>
<name>SYK_PSYWF</name>
<accession>A5WFG0</accession>
<comment type="catalytic activity">
    <reaction evidence="1">
        <text>tRNA(Lys) + L-lysine + ATP = L-lysyl-tRNA(Lys) + AMP + diphosphate</text>
        <dbReference type="Rhea" id="RHEA:20792"/>
        <dbReference type="Rhea" id="RHEA-COMP:9696"/>
        <dbReference type="Rhea" id="RHEA-COMP:9697"/>
        <dbReference type="ChEBI" id="CHEBI:30616"/>
        <dbReference type="ChEBI" id="CHEBI:32551"/>
        <dbReference type="ChEBI" id="CHEBI:33019"/>
        <dbReference type="ChEBI" id="CHEBI:78442"/>
        <dbReference type="ChEBI" id="CHEBI:78529"/>
        <dbReference type="ChEBI" id="CHEBI:456215"/>
        <dbReference type="EC" id="6.1.1.6"/>
    </reaction>
</comment>
<comment type="cofactor">
    <cofactor evidence="1">
        <name>Mg(2+)</name>
        <dbReference type="ChEBI" id="CHEBI:18420"/>
    </cofactor>
    <text evidence="1">Binds 3 Mg(2+) ions per subunit.</text>
</comment>
<comment type="subunit">
    <text evidence="1">Homodimer.</text>
</comment>
<comment type="subcellular location">
    <subcellularLocation>
        <location evidence="1">Cytoplasm</location>
    </subcellularLocation>
</comment>
<comment type="similarity">
    <text evidence="1">Belongs to the class-II aminoacyl-tRNA synthetase family.</text>
</comment>